<keyword id="KW-0238">DNA-binding</keyword>
<keyword id="KW-0539">Nucleus</keyword>
<keyword id="KW-1185">Reference proteome</keyword>
<keyword id="KW-0677">Repeat</keyword>
<keyword id="KW-0804">Transcription</keyword>
<keyword id="KW-0805">Transcription regulation</keyword>
<comment type="function">
    <text evidence="1">Probable transcription factor.</text>
</comment>
<comment type="subunit">
    <text evidence="3">Interacts with FBX5.</text>
</comment>
<comment type="subcellular location">
    <subcellularLocation>
        <location evidence="2">Nucleus</location>
    </subcellularLocation>
</comment>
<comment type="tissue specificity">
    <text evidence="3">Highly expressed in roots and at lower levels in leaves, stems and flowers.</text>
</comment>
<comment type="induction">
    <text evidence="3">Induced by abscisic acid (ABA) and gravity in roots.</text>
</comment>
<proteinExistence type="evidence at protein level"/>
<accession>Q9FJP2</accession>
<accession>Q9ZTD8</accession>
<organism>
    <name type="scientific">Arabidopsis thaliana</name>
    <name type="common">Mouse-ear cress</name>
    <dbReference type="NCBI Taxonomy" id="3702"/>
    <lineage>
        <taxon>Eukaryota</taxon>
        <taxon>Viridiplantae</taxon>
        <taxon>Streptophyta</taxon>
        <taxon>Embryophyta</taxon>
        <taxon>Tracheophyta</taxon>
        <taxon>Spermatophyta</taxon>
        <taxon>Magnoliopsida</taxon>
        <taxon>eudicotyledons</taxon>
        <taxon>Gunneridae</taxon>
        <taxon>Pentapetalae</taxon>
        <taxon>rosids</taxon>
        <taxon>malvids</taxon>
        <taxon>Brassicales</taxon>
        <taxon>Brassicaceae</taxon>
        <taxon>Camelineae</taxon>
        <taxon>Arabidopsis</taxon>
    </lineage>
</organism>
<sequence>MGRSPSSDETGLKKGPWLPEEDDKLINYIHKHGHSSWSALPKLAGLNRCGKSCRLRWTNYLRPDIKRGKFSAEEEETILNLHAVLGNKWSMIASHLPGRTDNEIKNFWNTHLKKKLIQMGFDPMTHQPRTDDIFSSLSQLMSLSNLRGLVDLQQQFPMEDQALLNLQTEMAKLQLFQYLLQPSPAPMSINNINPNILNLLIKENSVTSNIDLGFLSSHLQDFNNNNLPSLKTLDDNHFSQNTSPIWLHEPPSLNQTMLPTHDPCAQSVDGFGSNQASSSHDQEVAVTDSVDWPDHHLFDDSMFPDISYQS</sequence>
<name>MYB53_ARATH</name>
<gene>
    <name evidence="4" type="primary">MYB53</name>
    <name evidence="6" type="ordered locus">At5g65230</name>
    <name evidence="7" type="ORF">MQN23.17</name>
</gene>
<evidence type="ECO:0000250" key="1">
    <source>
        <dbReference type="UniProtKB" id="Q9M2D9"/>
    </source>
</evidence>
<evidence type="ECO:0000255" key="2">
    <source>
        <dbReference type="PROSITE-ProRule" id="PRU00625"/>
    </source>
</evidence>
<evidence type="ECO:0000269" key="3">
    <source>
    </source>
</evidence>
<evidence type="ECO:0000303" key="4">
    <source>
    </source>
</evidence>
<evidence type="ECO:0000305" key="5"/>
<evidence type="ECO:0000312" key="6">
    <source>
        <dbReference type="Araport" id="AT5G65230"/>
    </source>
</evidence>
<evidence type="ECO:0000312" key="7">
    <source>
        <dbReference type="EMBL" id="BAB11659.1"/>
    </source>
</evidence>
<dbReference type="EMBL" id="AY519646">
    <property type="protein sequence ID" value="AAS10116.1"/>
    <property type="molecule type" value="mRNA"/>
</dbReference>
<dbReference type="EMBL" id="AB013395">
    <property type="protein sequence ID" value="BAB11659.1"/>
    <property type="molecule type" value="Genomic_DNA"/>
</dbReference>
<dbReference type="EMBL" id="CP002688">
    <property type="protein sequence ID" value="AED98026.1"/>
    <property type="molecule type" value="Genomic_DNA"/>
</dbReference>
<dbReference type="EMBL" id="AF062889">
    <property type="protein sequence ID" value="AAC83611.1"/>
    <property type="molecule type" value="mRNA"/>
</dbReference>
<dbReference type="PIR" id="T51661">
    <property type="entry name" value="T51661"/>
</dbReference>
<dbReference type="RefSeq" id="NP_201326.1">
    <property type="nucleotide sequence ID" value="NM_125921.3"/>
</dbReference>
<dbReference type="SMR" id="Q9FJP2"/>
<dbReference type="STRING" id="3702.Q9FJP2"/>
<dbReference type="PaxDb" id="3702-AT5G65230.1"/>
<dbReference type="EnsemblPlants" id="AT5G65230.1">
    <property type="protein sequence ID" value="AT5G65230.1"/>
    <property type="gene ID" value="AT5G65230"/>
</dbReference>
<dbReference type="GeneID" id="836648"/>
<dbReference type="Gramene" id="AT5G65230.1">
    <property type="protein sequence ID" value="AT5G65230.1"/>
    <property type="gene ID" value="AT5G65230"/>
</dbReference>
<dbReference type="KEGG" id="ath:AT5G65230"/>
<dbReference type="Araport" id="AT5G65230"/>
<dbReference type="TAIR" id="AT5G65230">
    <property type="gene designation" value="MYB53"/>
</dbReference>
<dbReference type="eggNOG" id="KOG0048">
    <property type="taxonomic scope" value="Eukaryota"/>
</dbReference>
<dbReference type="HOGENOM" id="CLU_028567_15_4_1"/>
<dbReference type="InParanoid" id="Q9FJP2"/>
<dbReference type="OMA" id="IWLHEPP"/>
<dbReference type="PhylomeDB" id="Q9FJP2"/>
<dbReference type="PRO" id="PR:Q9FJP2"/>
<dbReference type="Proteomes" id="UP000006548">
    <property type="component" value="Chromosome 5"/>
</dbReference>
<dbReference type="ExpressionAtlas" id="Q9FJP2">
    <property type="expression patterns" value="baseline and differential"/>
</dbReference>
<dbReference type="GO" id="GO:0005634">
    <property type="term" value="C:nucleus"/>
    <property type="evidence" value="ECO:0007669"/>
    <property type="project" value="UniProtKB-SubCell"/>
</dbReference>
<dbReference type="GO" id="GO:0003700">
    <property type="term" value="F:DNA-binding transcription factor activity"/>
    <property type="evidence" value="ECO:0000314"/>
    <property type="project" value="TAIR"/>
</dbReference>
<dbReference type="GO" id="GO:0000976">
    <property type="term" value="F:transcription cis-regulatory region binding"/>
    <property type="evidence" value="ECO:0000353"/>
    <property type="project" value="TAIR"/>
</dbReference>
<dbReference type="CDD" id="cd00167">
    <property type="entry name" value="SANT"/>
    <property type="match status" value="2"/>
</dbReference>
<dbReference type="FunFam" id="1.10.10.60:FF:000001">
    <property type="entry name" value="MYB-related transcription factor"/>
    <property type="match status" value="1"/>
</dbReference>
<dbReference type="FunFam" id="1.10.10.60:FF:000349">
    <property type="entry name" value="Transcription factor MYB39"/>
    <property type="match status" value="1"/>
</dbReference>
<dbReference type="Gene3D" id="1.10.10.60">
    <property type="entry name" value="Homeodomain-like"/>
    <property type="match status" value="2"/>
</dbReference>
<dbReference type="InterPro" id="IPR009057">
    <property type="entry name" value="Homeodomain-like_sf"/>
</dbReference>
<dbReference type="InterPro" id="IPR017930">
    <property type="entry name" value="Myb_dom"/>
</dbReference>
<dbReference type="InterPro" id="IPR015495">
    <property type="entry name" value="Myb_TF_plants"/>
</dbReference>
<dbReference type="InterPro" id="IPR001005">
    <property type="entry name" value="SANT/Myb"/>
</dbReference>
<dbReference type="PANTHER" id="PTHR47994">
    <property type="entry name" value="F14D16.11-RELATED"/>
    <property type="match status" value="1"/>
</dbReference>
<dbReference type="Pfam" id="PF00249">
    <property type="entry name" value="Myb_DNA-binding"/>
    <property type="match status" value="2"/>
</dbReference>
<dbReference type="SMART" id="SM00717">
    <property type="entry name" value="SANT"/>
    <property type="match status" value="2"/>
</dbReference>
<dbReference type="SUPFAM" id="SSF46689">
    <property type="entry name" value="Homeodomain-like"/>
    <property type="match status" value="1"/>
</dbReference>
<dbReference type="PROSITE" id="PS51294">
    <property type="entry name" value="HTH_MYB"/>
    <property type="match status" value="2"/>
</dbReference>
<feature type="chain" id="PRO_0000442925" description="Transcription factor MYB53">
    <location>
        <begin position="1"/>
        <end position="310"/>
    </location>
</feature>
<feature type="domain" description="HTH myb-type 1" evidence="2">
    <location>
        <begin position="9"/>
        <end position="61"/>
    </location>
</feature>
<feature type="domain" description="HTH myb-type 2" evidence="2">
    <location>
        <begin position="62"/>
        <end position="116"/>
    </location>
</feature>
<feature type="DNA-binding region" description="H-T-H motif" evidence="2">
    <location>
        <begin position="37"/>
        <end position="61"/>
    </location>
</feature>
<feature type="DNA-binding region" description="H-T-H motif" evidence="2">
    <location>
        <begin position="89"/>
        <end position="112"/>
    </location>
</feature>
<feature type="sequence conflict" description="In Ref. 4; AAC83611." evidence="5" ref="4">
    <original>N</original>
    <variation>S</variation>
    <location>
        <position position="224"/>
    </location>
</feature>
<reference key="1">
    <citation type="submission" date="2004-01" db="EMBL/GenBank/DDBJ databases">
        <title>The MYB transcription factor family in Arabidopsis: A genome-wide cloning and expression pattern analysis.</title>
        <authorList>
            <person name="Qu L."/>
            <person name="Gu H."/>
        </authorList>
    </citation>
    <scope>NUCLEOTIDE SEQUENCE [MRNA]</scope>
</reference>
<reference key="2">
    <citation type="journal article" date="1998" name="DNA Res.">
        <title>Structural analysis of Arabidopsis thaliana chromosome 5. VI. Sequence features of the regions of 1,367,185 bp covered by 19 physically assigned P1 and TAC clones.</title>
        <authorList>
            <person name="Kotani H."/>
            <person name="Nakamura Y."/>
            <person name="Sato S."/>
            <person name="Asamizu E."/>
            <person name="Kaneko T."/>
            <person name="Miyajima N."/>
            <person name="Tabata S."/>
        </authorList>
    </citation>
    <scope>NUCLEOTIDE SEQUENCE [LARGE SCALE GENOMIC DNA]</scope>
    <source>
        <strain>cv. Columbia</strain>
    </source>
</reference>
<reference key="3">
    <citation type="journal article" date="2017" name="Plant J.">
        <title>Araport11: a complete reannotation of the Arabidopsis thaliana reference genome.</title>
        <authorList>
            <person name="Cheng C.Y."/>
            <person name="Krishnakumar V."/>
            <person name="Chan A.P."/>
            <person name="Thibaud-Nissen F."/>
            <person name="Schobel S."/>
            <person name="Town C.D."/>
        </authorList>
    </citation>
    <scope>GENOME REANNOTATION</scope>
    <source>
        <strain>cv. Columbia</strain>
    </source>
</reference>
<reference key="4">
    <citation type="journal article" date="1998" name="Plant J.">
        <title>Towards functional characterisation of the members of the R2R3-MYB gene family from Arabidopsis thaliana.</title>
        <authorList>
            <person name="Kranz H.D."/>
            <person name="Denekamp M."/>
            <person name="Greco R."/>
            <person name="Jin H.-L."/>
            <person name="Leyva A."/>
            <person name="Meissner R.C."/>
            <person name="Petroni K."/>
            <person name="Urzainqui A."/>
            <person name="Bevan M."/>
            <person name="Martin C."/>
            <person name="Smeekens S."/>
            <person name="Tonelli C."/>
            <person name="Paz-Ares J."/>
            <person name="Weisshaar B."/>
        </authorList>
    </citation>
    <scope>NUCLEOTIDE SEQUENCE [MRNA] OF 78-310</scope>
    <scope>NOMENCLATURE</scope>
    <source>
        <strain>cv. Columbia</strain>
    </source>
</reference>
<reference key="5">
    <citation type="journal article" date="2014" name="New Phytol.">
        <title>AtMYB93 is a novel negative regulator of lateral root development in Arabidopsis.</title>
        <authorList>
            <person name="Gibbs D.J."/>
            <person name="Voss U."/>
            <person name="Harding S.A."/>
            <person name="Fannon J."/>
            <person name="Moody L.A."/>
            <person name="Yamada E."/>
            <person name="Swarup K."/>
            <person name="Nibau C."/>
            <person name="Bassel G.W."/>
            <person name="Choudhary A."/>
            <person name="Lavenus J."/>
            <person name="Bradshaw S.J."/>
            <person name="Stekel D.J."/>
            <person name="Bennett M.J."/>
            <person name="Coates J.C."/>
        </authorList>
    </citation>
    <scope>INTERACTION WITH FBX5</scope>
    <scope>TISSUE SPECIFICITY</scope>
    <scope>INDUCTION</scope>
</reference>
<protein>
    <recommendedName>
        <fullName evidence="4">Transcription factor MYB53</fullName>
    </recommendedName>
    <alternativeName>
        <fullName evidence="4">Myb-related protein 53</fullName>
        <shortName evidence="4">AtMYB53</shortName>
    </alternativeName>
</protein>